<sequence length="770" mass="85501">MPYVGVGAQTVSTSLTGAPMVKAYIAIAASLIFVFCIAALGVHHSERKFNKFNKVSIDDIHKSDAGVIQDNIKTENIKKYLRIFTKDPHVAGTEANKKVAYEIANAWSEAGLEDVHTLPYEVLLSYPDFENPNSVIIKSSAGKEVFKSKGVSPVIIPDEQSGKYAGHQWLAYAGNGSASADVVYINHGTANDFKNLKLMGVDIKGKIALMRYGHGFRGDKIHKAQQAGAIGAILFSDTQDVAQDGVESENVYPKKIWMPNEGVQRGSLMHGDGDALSPYYPSKKELFKGRTIEEAKEDGVLPSIPVLPVSYTTGYEILKRLSGRPAPSDWQGFVGGNLTYKLGPGFVNGEKLSINVHSELRTKRIRNVIGYIRGSEEPDSYIMLGNHFDAWVYGSIDPNSGTAVLAEVARAMMQTINETSWKPARTIVFNAWDAEEFGLIGSTEFVEEFVNILQKRAVVYINMDCIQGNISLHVDTVPILEHAVIEASKQVENPSKRERSRGRKTLYDTWMKVFPDKKAGVPKIRVPGGGSDHAPFLNFAGVPVINFTFKNYTTWDTYPLYHTMYETPFSNIHLLDTDNLSVHKAIGQYWAELAKTFADDVILPMNTTHFASVMLKTYLPQLKTTISGINVSRSDFEDIRTQYALLSKSAQDLLTMSKKFQETIHFTQHSFSQNPYDPKHVNAVNERLKSTERCFINPRGVSMHNPSARHVLFSVSDSDSYSSSLMAGVQNAINSYDLNPTKKGLREIINQISIVQYSVICVVNTLRDVI</sequence>
<proteinExistence type="evidence at protein level"/>
<reference key="1">
    <citation type="journal article" date="1998" name="Science">
        <title>Genome sequence of the nematode C. elegans: a platform for investigating biology.</title>
        <authorList>
            <consortium name="The C. elegans sequencing consortium"/>
        </authorList>
    </citation>
    <scope>NUCLEOTIDE SEQUENCE [LARGE SCALE GENOMIC DNA]</scope>
    <scope>ALTERNATIVE SPLICING</scope>
    <source>
        <strain>Bristol N2</strain>
    </source>
</reference>
<reference key="2">
    <citation type="journal article" date="2007" name="Mol. Cell. Proteomics">
        <title>Proteomics reveals N-linked glycoprotein diversity in Caenorhabditis elegans and suggests an atypical translocation mechanism for integral membrane proteins.</title>
        <authorList>
            <person name="Kaji H."/>
            <person name="Kamiie J."/>
            <person name="Kawakami H."/>
            <person name="Kido K."/>
            <person name="Yamauchi Y."/>
            <person name="Shinkawa T."/>
            <person name="Taoka M."/>
            <person name="Takahashi N."/>
            <person name="Isobe T."/>
        </authorList>
    </citation>
    <scope>GLYCOSYLATION [LARGE SCALE ANALYSIS] AT ASN-175 AND ASN-337</scope>
    <scope>IDENTIFICATION BY MASS SPECTROMETRY</scope>
    <source>
        <strain>Bristol N2</strain>
    </source>
</reference>
<name>GCP2_CAEEL</name>
<evidence type="ECO:0000250" key="1">
    <source>
        <dbReference type="UniProtKB" id="Q04609"/>
    </source>
</evidence>
<evidence type="ECO:0000255" key="2"/>
<evidence type="ECO:0000269" key="3">
    <source>
    </source>
</evidence>
<evidence type="ECO:0000305" key="4"/>
<evidence type="ECO:0000312" key="5">
    <source>
        <dbReference type="WormBase" id="R57.1a"/>
    </source>
</evidence>
<evidence type="ECO:0000312" key="6">
    <source>
        <dbReference type="WormBase" id="R57.1b"/>
    </source>
</evidence>
<protein>
    <recommendedName>
        <fullName evidence="1">Glutamate carboxypeptidase 2 homolog</fullName>
        <ecNumber evidence="1">3.4.17.21</ecNumber>
    </recommendedName>
    <alternativeName>
        <fullName evidence="1">Glutamate carboxypeptidase II homolog</fullName>
    </alternativeName>
</protein>
<accession>P91406</accession>
<accession>Q65ZG3</accession>
<accession>Q65ZG4</accession>
<accession>Q86FL5</accession>
<keyword id="KW-0025">Alternative splicing</keyword>
<keyword id="KW-0121">Carboxypeptidase</keyword>
<keyword id="KW-0325">Glycoprotein</keyword>
<keyword id="KW-0378">Hydrolase</keyword>
<keyword id="KW-0472">Membrane</keyword>
<keyword id="KW-0479">Metal-binding</keyword>
<keyword id="KW-0482">Metalloprotease</keyword>
<keyword id="KW-0645">Protease</keyword>
<keyword id="KW-1185">Reference proteome</keyword>
<keyword id="KW-0735">Signal-anchor</keyword>
<keyword id="KW-0812">Transmembrane</keyword>
<keyword id="KW-1133">Transmembrane helix</keyword>
<keyword id="KW-0862">Zinc</keyword>
<gene>
    <name evidence="5" type="primary">gcp-2.1</name>
    <name evidence="5" type="ORF">R57.1</name>
</gene>
<feature type="chain" id="PRO_0000174128" description="Glutamate carboxypeptidase 2 homolog">
    <location>
        <begin position="1"/>
        <end position="770"/>
    </location>
</feature>
<feature type="topological domain" description="Cytoplasmic" evidence="2">
    <location>
        <begin position="1"/>
        <end position="25"/>
    </location>
</feature>
<feature type="transmembrane region" description="Helical; Signal-anchor for type II membrane protein" evidence="2">
    <location>
        <begin position="26"/>
        <end position="42"/>
    </location>
</feature>
<feature type="topological domain" description="Extracellular" evidence="2">
    <location>
        <begin position="43"/>
        <end position="770"/>
    </location>
</feature>
<feature type="region of interest" description="Catalytic" evidence="1">
    <location>
        <begin position="282"/>
        <end position="597"/>
    </location>
</feature>
<feature type="active site" description="Nucleophile" evidence="1">
    <location>
        <position position="435"/>
    </location>
</feature>
<feature type="binding site" evidence="1">
    <location>
        <position position="387"/>
    </location>
    <ligand>
        <name>Zn(2+)</name>
        <dbReference type="ChEBI" id="CHEBI:29105"/>
        <label>1</label>
    </ligand>
</feature>
<feature type="binding site" evidence="1">
    <location>
        <position position="397"/>
    </location>
    <ligand>
        <name>Zn(2+)</name>
        <dbReference type="ChEBI" id="CHEBI:29105"/>
        <label>1</label>
    </ligand>
</feature>
<feature type="binding site" evidence="1">
    <location>
        <position position="397"/>
    </location>
    <ligand>
        <name>Zn(2+)</name>
        <dbReference type="ChEBI" id="CHEBI:29105"/>
        <label>2</label>
    </ligand>
</feature>
<feature type="binding site" evidence="1">
    <location>
        <position position="436"/>
    </location>
    <ligand>
        <name>Zn(2+)</name>
        <dbReference type="ChEBI" id="CHEBI:29105"/>
        <label>2</label>
    </ligand>
</feature>
<feature type="binding site" evidence="1">
    <location>
        <position position="464"/>
    </location>
    <ligand>
        <name>Zn(2+)</name>
        <dbReference type="ChEBI" id="CHEBI:29105"/>
        <label>1</label>
    </ligand>
</feature>
<feature type="binding site" evidence="1">
    <location>
        <position position="562"/>
    </location>
    <ligand>
        <name>Zn(2+)</name>
        <dbReference type="ChEBI" id="CHEBI:29105"/>
        <label>2</label>
    </ligand>
</feature>
<feature type="glycosylation site" description="N-linked (GlcNAc...) asparagine" evidence="3">
    <location>
        <position position="175"/>
    </location>
</feature>
<feature type="glycosylation site" description="N-linked (GlcNAc...) asparagine" evidence="3">
    <location>
        <position position="337"/>
    </location>
</feature>
<feature type="glycosylation site" description="N-linked (GlcNAc...) asparagine" evidence="2">
    <location>
        <position position="417"/>
    </location>
</feature>
<feature type="glycosylation site" description="N-linked (GlcNAc...) asparagine" evidence="2">
    <location>
        <position position="469"/>
    </location>
</feature>
<feature type="glycosylation site" description="N-linked (GlcNAc...) asparagine" evidence="2">
    <location>
        <position position="546"/>
    </location>
</feature>
<feature type="glycosylation site" description="N-linked (GlcNAc...) asparagine" evidence="2">
    <location>
        <position position="551"/>
    </location>
</feature>
<feature type="glycosylation site" description="N-linked (GlcNAc...) asparagine" evidence="2">
    <location>
        <position position="579"/>
    </location>
</feature>
<feature type="glycosylation site" description="N-linked (GlcNAc...) asparagine" evidence="2">
    <location>
        <position position="606"/>
    </location>
</feature>
<feature type="glycosylation site" description="N-linked (GlcNAc...) asparagine" evidence="2">
    <location>
        <position position="630"/>
    </location>
</feature>
<feature type="splice variant" id="VSP_009602" description="In isoform b." evidence="4">
    <location>
        <begin position="1"/>
        <end position="19"/>
    </location>
</feature>
<feature type="splice variant" id="VSP_009603" description="In isoform b." evidence="4">
    <location>
        <begin position="596"/>
        <end position="770"/>
    </location>
</feature>
<dbReference type="EC" id="3.4.17.21" evidence="1"/>
<dbReference type="EMBL" id="FO081648">
    <property type="protein sequence ID" value="CCD73106.1"/>
    <property type="molecule type" value="Genomic_DNA"/>
</dbReference>
<dbReference type="EMBL" id="FO081648">
    <property type="protein sequence ID" value="CCD73107.1"/>
    <property type="molecule type" value="Genomic_DNA"/>
</dbReference>
<dbReference type="PIR" id="T30154">
    <property type="entry name" value="T30154"/>
</dbReference>
<dbReference type="RefSeq" id="NP_508085.2">
    <molecule id="P91406-1"/>
    <property type="nucleotide sequence ID" value="NM_075684.5"/>
</dbReference>
<dbReference type="RefSeq" id="NP_872248.2">
    <molecule id="P91406-2"/>
    <property type="nucleotide sequence ID" value="NM_182448.5"/>
</dbReference>
<dbReference type="SMR" id="P91406"/>
<dbReference type="FunCoup" id="P91406">
    <property type="interactions" value="288"/>
</dbReference>
<dbReference type="STRING" id="6239.R57.1a.1"/>
<dbReference type="MEROPS" id="M28.A19"/>
<dbReference type="GlyCosmos" id="P91406">
    <property type="glycosylation" value="9 sites, No reported glycans"/>
</dbReference>
<dbReference type="iPTMnet" id="P91406"/>
<dbReference type="PaxDb" id="6239-R57.1a"/>
<dbReference type="PeptideAtlas" id="P91406"/>
<dbReference type="EnsemblMetazoa" id="R57.1a.1">
    <molecule id="P91406-1"/>
    <property type="protein sequence ID" value="R57.1a.1"/>
    <property type="gene ID" value="WBGene00020082"/>
</dbReference>
<dbReference type="EnsemblMetazoa" id="R57.1b.1">
    <molecule id="P91406-2"/>
    <property type="protein sequence ID" value="R57.1b.1"/>
    <property type="gene ID" value="WBGene00020082"/>
</dbReference>
<dbReference type="GeneID" id="180386"/>
<dbReference type="KEGG" id="cel:CELE_R57.1"/>
<dbReference type="UCSC" id="R57.1c.2">
    <molecule id="P91406-1"/>
    <property type="organism name" value="c. elegans"/>
</dbReference>
<dbReference type="AGR" id="WB:WBGene00020082"/>
<dbReference type="CTD" id="180386"/>
<dbReference type="WormBase" id="R57.1a">
    <molecule id="P91406-1"/>
    <property type="protein sequence ID" value="CE30114"/>
    <property type="gene ID" value="WBGene00020082"/>
    <property type="gene designation" value="gcp-2.1"/>
</dbReference>
<dbReference type="WormBase" id="R57.1b">
    <molecule id="P91406-2"/>
    <property type="protein sequence ID" value="CE37270"/>
    <property type="gene ID" value="WBGene00020082"/>
    <property type="gene designation" value="gcp-2.1"/>
</dbReference>
<dbReference type="eggNOG" id="KOG2195">
    <property type="taxonomic scope" value="Eukaryota"/>
</dbReference>
<dbReference type="GeneTree" id="ENSGT01030000234598"/>
<dbReference type="InParanoid" id="P91406"/>
<dbReference type="OMA" id="NVVIASW"/>
<dbReference type="OrthoDB" id="5841748at2759"/>
<dbReference type="PhylomeDB" id="P91406"/>
<dbReference type="Reactome" id="R-CEL-432722">
    <property type="pathway name" value="Golgi Associated Vesicle Biogenesis"/>
</dbReference>
<dbReference type="Reactome" id="R-CEL-8963693">
    <property type="pathway name" value="Aspartate and asparagine metabolism"/>
</dbReference>
<dbReference type="Reactome" id="R-CEL-8980692">
    <property type="pathway name" value="RHOA GTPase cycle"/>
</dbReference>
<dbReference type="Reactome" id="R-CEL-9013026">
    <property type="pathway name" value="RHOB GTPase cycle"/>
</dbReference>
<dbReference type="Reactome" id="R-CEL-9013149">
    <property type="pathway name" value="RAC1 GTPase cycle"/>
</dbReference>
<dbReference type="Reactome" id="R-CEL-9013404">
    <property type="pathway name" value="RAC2 GTPase cycle"/>
</dbReference>
<dbReference type="Reactome" id="R-CEL-9013406">
    <property type="pathway name" value="RHOQ GTPase cycle"/>
</dbReference>
<dbReference type="Reactome" id="R-CEL-9013407">
    <property type="pathway name" value="RHOH GTPase cycle"/>
</dbReference>
<dbReference type="Reactome" id="R-CEL-9013408">
    <property type="pathway name" value="RHOG GTPase cycle"/>
</dbReference>
<dbReference type="Reactome" id="R-CEL-9013423">
    <property type="pathway name" value="RAC3 GTPase cycle"/>
</dbReference>
<dbReference type="PRO" id="PR:P91406"/>
<dbReference type="Proteomes" id="UP000001940">
    <property type="component" value="Chromosome X"/>
</dbReference>
<dbReference type="Bgee" id="WBGene00020082">
    <property type="expression patterns" value="Expressed in larva and 3 other cell types or tissues"/>
</dbReference>
<dbReference type="ExpressionAtlas" id="P91406">
    <property type="expression patterns" value="baseline and differential"/>
</dbReference>
<dbReference type="GO" id="GO:0016020">
    <property type="term" value="C:membrane"/>
    <property type="evidence" value="ECO:0007669"/>
    <property type="project" value="UniProtKB-SubCell"/>
</dbReference>
<dbReference type="GO" id="GO:0004180">
    <property type="term" value="F:carboxypeptidase activity"/>
    <property type="evidence" value="ECO:0000318"/>
    <property type="project" value="GO_Central"/>
</dbReference>
<dbReference type="GO" id="GO:0046872">
    <property type="term" value="F:metal ion binding"/>
    <property type="evidence" value="ECO:0007669"/>
    <property type="project" value="UniProtKB-KW"/>
</dbReference>
<dbReference type="GO" id="GO:0004181">
    <property type="term" value="F:metallocarboxypeptidase activity"/>
    <property type="evidence" value="ECO:0000250"/>
    <property type="project" value="UniProtKB"/>
</dbReference>
<dbReference type="GO" id="GO:0006508">
    <property type="term" value="P:proteolysis"/>
    <property type="evidence" value="ECO:0000250"/>
    <property type="project" value="UniProtKB"/>
</dbReference>
<dbReference type="CDD" id="cd08022">
    <property type="entry name" value="M28_PSMA_like"/>
    <property type="match status" value="1"/>
</dbReference>
<dbReference type="CDD" id="cd02121">
    <property type="entry name" value="PA_GCPII_like"/>
    <property type="match status" value="1"/>
</dbReference>
<dbReference type="FunFam" id="1.20.930.40:FF:000009">
    <property type="entry name" value="Glutamate carboxypeptidase 2 homolog"/>
    <property type="match status" value="1"/>
</dbReference>
<dbReference type="FunFam" id="3.50.30.30:FF:000033">
    <property type="entry name" value="Glutamate carboxypeptidase 2 homolog"/>
    <property type="match status" value="1"/>
</dbReference>
<dbReference type="FunFam" id="3.40.630.10:FF:000101">
    <property type="entry name" value="N-acetylated alpha-linked acidic dipeptidase like 1"/>
    <property type="match status" value="1"/>
</dbReference>
<dbReference type="Gene3D" id="3.50.30.30">
    <property type="match status" value="1"/>
</dbReference>
<dbReference type="Gene3D" id="1.20.930.40">
    <property type="entry name" value="Transferrin receptor-like, dimerisation domain"/>
    <property type="match status" value="1"/>
</dbReference>
<dbReference type="Gene3D" id="3.40.630.10">
    <property type="entry name" value="Zn peptidases"/>
    <property type="match status" value="1"/>
</dbReference>
<dbReference type="InterPro" id="IPR046450">
    <property type="entry name" value="PA_dom_sf"/>
</dbReference>
<dbReference type="InterPro" id="IPR003137">
    <property type="entry name" value="PA_domain"/>
</dbReference>
<dbReference type="InterPro" id="IPR007484">
    <property type="entry name" value="Peptidase_M28"/>
</dbReference>
<dbReference type="InterPro" id="IPR039373">
    <property type="entry name" value="Peptidase_M28B"/>
</dbReference>
<dbReference type="InterPro" id="IPR007365">
    <property type="entry name" value="TFR-like_dimer_dom"/>
</dbReference>
<dbReference type="InterPro" id="IPR036757">
    <property type="entry name" value="TFR-like_dimer_dom_sf"/>
</dbReference>
<dbReference type="PANTHER" id="PTHR10404:SF77">
    <property type="entry name" value="GLUTAMATE CARBOXYPEPTIDASE 2 HOMOLOG"/>
    <property type="match status" value="1"/>
</dbReference>
<dbReference type="PANTHER" id="PTHR10404">
    <property type="entry name" value="N-ACETYLATED-ALPHA-LINKED ACIDIC DIPEPTIDASE"/>
    <property type="match status" value="1"/>
</dbReference>
<dbReference type="Pfam" id="PF02225">
    <property type="entry name" value="PA"/>
    <property type="match status" value="1"/>
</dbReference>
<dbReference type="Pfam" id="PF04389">
    <property type="entry name" value="Peptidase_M28"/>
    <property type="match status" value="1"/>
</dbReference>
<dbReference type="Pfam" id="PF04253">
    <property type="entry name" value="TFR_dimer"/>
    <property type="match status" value="1"/>
</dbReference>
<dbReference type="SUPFAM" id="SSF52025">
    <property type="entry name" value="PA domain"/>
    <property type="match status" value="1"/>
</dbReference>
<dbReference type="SUPFAM" id="SSF47672">
    <property type="entry name" value="Transferrin receptor-like dimerisation domain"/>
    <property type="match status" value="1"/>
</dbReference>
<dbReference type="SUPFAM" id="SSF53187">
    <property type="entry name" value="Zn-dependent exopeptidases"/>
    <property type="match status" value="1"/>
</dbReference>
<comment type="catalytic activity">
    <reaction evidence="1">
        <text>Release of an unsubstituted, C-terminal glutamyl residue, typically from Ac-Asp-Glu or folylpoly-gamma-glutamates.</text>
        <dbReference type="EC" id="3.4.17.21"/>
    </reaction>
</comment>
<comment type="cofactor">
    <cofactor evidence="1">
        <name>Zn(2+)</name>
        <dbReference type="ChEBI" id="CHEBI:29105"/>
    </cofactor>
    <text evidence="1">Binds 2 Zn(2+) ions per subunit.</text>
</comment>
<comment type="subcellular location">
    <subcellularLocation>
        <location>Membrane</location>
        <topology>Single-pass type II membrane protein</topology>
    </subcellularLocation>
</comment>
<comment type="alternative products">
    <event type="alternative splicing"/>
    <isoform>
        <id>P91406-1</id>
        <name evidence="5">a</name>
        <sequence type="displayed"/>
    </isoform>
    <isoform>
        <id>P91406-2</id>
        <name evidence="6">b</name>
        <sequence type="described" ref="VSP_009602 VSP_009603"/>
    </isoform>
</comment>
<comment type="similarity">
    <text evidence="4">Belongs to the peptidase M28 family. M28B subfamily.</text>
</comment>
<organism>
    <name type="scientific">Caenorhabditis elegans</name>
    <dbReference type="NCBI Taxonomy" id="6239"/>
    <lineage>
        <taxon>Eukaryota</taxon>
        <taxon>Metazoa</taxon>
        <taxon>Ecdysozoa</taxon>
        <taxon>Nematoda</taxon>
        <taxon>Chromadorea</taxon>
        <taxon>Rhabditida</taxon>
        <taxon>Rhabditina</taxon>
        <taxon>Rhabditomorpha</taxon>
        <taxon>Rhabditoidea</taxon>
        <taxon>Rhabditidae</taxon>
        <taxon>Peloderinae</taxon>
        <taxon>Caenorhabditis</taxon>
    </lineage>
</organism>